<reference key="1">
    <citation type="submission" date="2008-05" db="EMBL/GenBank/DDBJ databases">
        <title>Genome sequence of Clostridium botulinum Ba4 strain 657.</title>
        <authorList>
            <person name="Shrivastava S."/>
            <person name="Brown J.L."/>
            <person name="Bruce D."/>
            <person name="Detter C."/>
            <person name="Munk C."/>
            <person name="Smith L.A."/>
            <person name="Smith T.J."/>
            <person name="Sutton G."/>
            <person name="Brettin T.S."/>
        </authorList>
    </citation>
    <scope>NUCLEOTIDE SEQUENCE [LARGE SCALE GENOMIC DNA]</scope>
    <source>
        <strain>657 / Type Ba4</strain>
    </source>
</reference>
<name>SPEH_CLOB6</name>
<accession>C3KUX9</accession>
<protein>
    <recommendedName>
        <fullName evidence="1">S-adenosylmethionine decarboxylase proenzyme</fullName>
        <shortName evidence="1">AdoMetDC</shortName>
        <shortName evidence="1">SAMDC</shortName>
        <ecNumber evidence="1">4.1.1.50</ecNumber>
    </recommendedName>
    <component>
        <recommendedName>
            <fullName evidence="1">S-adenosylmethionine decarboxylase beta chain</fullName>
        </recommendedName>
    </component>
    <component>
        <recommendedName>
            <fullName evidence="1">S-adenosylmethionine decarboxylase alpha chain</fullName>
        </recommendedName>
    </component>
</protein>
<sequence>MKYSGYHLVIDLFGCNFDQLENTEYMIEMLKKLAEALDTTIIAKAFHKFHPQGFSGALIISESHITIHTWPEDAYIGIDIFTCSKCFDSRKIVAYLKENLIFKKAEIKEILRGKID</sequence>
<feature type="chain" id="PRO_1000206302" description="S-adenosylmethionine decarboxylase beta chain" evidence="1">
    <location>
        <begin position="1"/>
        <end position="62"/>
    </location>
</feature>
<feature type="chain" id="PRO_1000206303" description="S-adenosylmethionine decarboxylase alpha chain" evidence="1">
    <location>
        <begin position="63"/>
        <end position="116"/>
    </location>
</feature>
<feature type="active site" description="Schiff-base intermediate with substrate; via pyruvic acid" evidence="1">
    <location>
        <position position="63"/>
    </location>
</feature>
<feature type="active site" description="Proton acceptor; for processing activity" evidence="1">
    <location>
        <position position="68"/>
    </location>
</feature>
<feature type="active site" description="Proton donor; for catalytic activity" evidence="1">
    <location>
        <position position="83"/>
    </location>
</feature>
<feature type="site" description="Cleavage (non-hydrolytic); by autolysis" evidence="1">
    <location>
        <begin position="62"/>
        <end position="63"/>
    </location>
</feature>
<feature type="modified residue" description="Pyruvic acid (Ser); by autocatalysis" evidence="1">
    <location>
        <position position="63"/>
    </location>
</feature>
<evidence type="ECO:0000255" key="1">
    <source>
        <dbReference type="HAMAP-Rule" id="MF_00464"/>
    </source>
</evidence>
<organism>
    <name type="scientific">Clostridium botulinum (strain 657 / Type Ba4)</name>
    <dbReference type="NCBI Taxonomy" id="515621"/>
    <lineage>
        <taxon>Bacteria</taxon>
        <taxon>Bacillati</taxon>
        <taxon>Bacillota</taxon>
        <taxon>Clostridia</taxon>
        <taxon>Eubacteriales</taxon>
        <taxon>Clostridiaceae</taxon>
        <taxon>Clostridium</taxon>
    </lineage>
</organism>
<comment type="function">
    <text evidence="1">Catalyzes the decarboxylation of S-adenosylmethionine to S-adenosylmethioninamine (dcAdoMet), the propylamine donor required for the synthesis of the polyamines spermine and spermidine from the diamine putrescine.</text>
</comment>
<comment type="catalytic activity">
    <reaction evidence="1">
        <text>S-adenosyl-L-methionine + H(+) = S-adenosyl 3-(methylsulfanyl)propylamine + CO2</text>
        <dbReference type="Rhea" id="RHEA:15981"/>
        <dbReference type="ChEBI" id="CHEBI:15378"/>
        <dbReference type="ChEBI" id="CHEBI:16526"/>
        <dbReference type="ChEBI" id="CHEBI:57443"/>
        <dbReference type="ChEBI" id="CHEBI:59789"/>
        <dbReference type="EC" id="4.1.1.50"/>
    </reaction>
</comment>
<comment type="cofactor">
    <cofactor evidence="1">
        <name>pyruvate</name>
        <dbReference type="ChEBI" id="CHEBI:15361"/>
    </cofactor>
    <text evidence="1">Binds 1 pyruvoyl group covalently per subunit.</text>
</comment>
<comment type="pathway">
    <text evidence="1">Amine and polyamine biosynthesis; S-adenosylmethioninamine biosynthesis; S-adenosylmethioninamine from S-adenosyl-L-methionine: step 1/1.</text>
</comment>
<comment type="subunit">
    <text evidence="1">Heterotetramer of two alpha and two beta chains arranged as a dimer of alpha/beta heterodimers.</text>
</comment>
<comment type="PTM">
    <text evidence="1">Is synthesized initially as an inactive proenzyme. Formation of the active enzyme involves a self-maturation process in which the active site pyruvoyl group is generated from an internal serine residue via an autocatalytic post-translational modification. Two non-identical subunits are generated from the proenzyme in this reaction, and the pyruvate is formed at the N-terminus of the alpha chain, which is derived from the carboxyl end of the proenzyme. The post-translation cleavage follows an unusual pathway, termed non-hydrolytic serinolysis, in which the side chain hydroxyl group of the serine supplies its oxygen atom to form the C-terminus of the beta chain, while the remainder of the serine residue undergoes an oxidative deamination to produce ammonia and the pyruvoyl group blocking the N-terminus of the alpha chain.</text>
</comment>
<comment type="similarity">
    <text evidence="1">Belongs to the prokaryotic AdoMetDC family. Type 1 subfamily.</text>
</comment>
<keyword id="KW-0068">Autocatalytic cleavage</keyword>
<keyword id="KW-0210">Decarboxylase</keyword>
<keyword id="KW-0456">Lyase</keyword>
<keyword id="KW-0620">Polyamine biosynthesis</keyword>
<keyword id="KW-0670">Pyruvate</keyword>
<keyword id="KW-0949">S-adenosyl-L-methionine</keyword>
<keyword id="KW-0704">Schiff base</keyword>
<keyword id="KW-0745">Spermidine biosynthesis</keyword>
<keyword id="KW-0865">Zymogen</keyword>
<gene>
    <name evidence="1" type="primary">speH</name>
    <name type="ordered locus">CLJ_B3649</name>
</gene>
<proteinExistence type="inferred from homology"/>
<dbReference type="EC" id="4.1.1.50" evidence="1"/>
<dbReference type="EMBL" id="CP001083">
    <property type="protein sequence ID" value="ACQ54838.1"/>
    <property type="molecule type" value="Genomic_DNA"/>
</dbReference>
<dbReference type="SMR" id="C3KUX9"/>
<dbReference type="KEGG" id="cbi:CLJ_B3649"/>
<dbReference type="HOGENOM" id="CLU_125470_2_3_9"/>
<dbReference type="UniPathway" id="UPA00331">
    <property type="reaction ID" value="UER00451"/>
</dbReference>
<dbReference type="Proteomes" id="UP000002333">
    <property type="component" value="Chromosome"/>
</dbReference>
<dbReference type="GO" id="GO:0005829">
    <property type="term" value="C:cytosol"/>
    <property type="evidence" value="ECO:0007669"/>
    <property type="project" value="TreeGrafter"/>
</dbReference>
<dbReference type="GO" id="GO:0004014">
    <property type="term" value="F:adenosylmethionine decarboxylase activity"/>
    <property type="evidence" value="ECO:0007669"/>
    <property type="project" value="UniProtKB-UniRule"/>
</dbReference>
<dbReference type="GO" id="GO:0008295">
    <property type="term" value="P:spermidine biosynthetic process"/>
    <property type="evidence" value="ECO:0007669"/>
    <property type="project" value="UniProtKB-UniRule"/>
</dbReference>
<dbReference type="FunFam" id="3.60.90.10:FF:000012">
    <property type="entry name" value="S-adenosylmethionine decarboxylase proenzyme"/>
    <property type="match status" value="1"/>
</dbReference>
<dbReference type="Gene3D" id="3.60.90.10">
    <property type="entry name" value="S-adenosylmethionine decarboxylase"/>
    <property type="match status" value="1"/>
</dbReference>
<dbReference type="HAMAP" id="MF_00464">
    <property type="entry name" value="AdoMetDC_1"/>
    <property type="match status" value="1"/>
</dbReference>
<dbReference type="InterPro" id="IPR003826">
    <property type="entry name" value="AdoMetDC_fam_prok"/>
</dbReference>
<dbReference type="InterPro" id="IPR016067">
    <property type="entry name" value="S-AdoMet_deCO2ase_core"/>
</dbReference>
<dbReference type="InterPro" id="IPR017716">
    <property type="entry name" value="S-AdoMet_deCOase_pro-enz"/>
</dbReference>
<dbReference type="NCBIfam" id="TIGR03330">
    <property type="entry name" value="SAM_DCase_Bsu"/>
    <property type="match status" value="1"/>
</dbReference>
<dbReference type="PANTHER" id="PTHR33866">
    <property type="entry name" value="S-ADENOSYLMETHIONINE DECARBOXYLASE PROENZYME"/>
    <property type="match status" value="1"/>
</dbReference>
<dbReference type="PANTHER" id="PTHR33866:SF2">
    <property type="entry name" value="S-ADENOSYLMETHIONINE DECARBOXYLASE PROENZYME"/>
    <property type="match status" value="1"/>
</dbReference>
<dbReference type="Pfam" id="PF02675">
    <property type="entry name" value="AdoMet_dc"/>
    <property type="match status" value="1"/>
</dbReference>
<dbReference type="SUPFAM" id="SSF56276">
    <property type="entry name" value="S-adenosylmethionine decarboxylase"/>
    <property type="match status" value="1"/>
</dbReference>